<comment type="similarity">
    <text evidence="1">Belongs to the UPF0246 family.</text>
</comment>
<protein>
    <recommendedName>
        <fullName evidence="1">UPF0246 protein YaaA</fullName>
    </recommendedName>
</protein>
<dbReference type="EMBL" id="CP000800">
    <property type="protein sequence ID" value="ABV16967.1"/>
    <property type="molecule type" value="Genomic_DNA"/>
</dbReference>
<dbReference type="RefSeq" id="WP_000906204.1">
    <property type="nucleotide sequence ID" value="NC_009801.1"/>
</dbReference>
<dbReference type="SMR" id="A7ZH96"/>
<dbReference type="GeneID" id="75203935"/>
<dbReference type="KEGG" id="ecw:EcE24377A_0006"/>
<dbReference type="HOGENOM" id="CLU_061989_0_0_6"/>
<dbReference type="Proteomes" id="UP000001122">
    <property type="component" value="Chromosome"/>
</dbReference>
<dbReference type="GO" id="GO:0005829">
    <property type="term" value="C:cytosol"/>
    <property type="evidence" value="ECO:0007669"/>
    <property type="project" value="TreeGrafter"/>
</dbReference>
<dbReference type="GO" id="GO:0033194">
    <property type="term" value="P:response to hydroperoxide"/>
    <property type="evidence" value="ECO:0007669"/>
    <property type="project" value="TreeGrafter"/>
</dbReference>
<dbReference type="HAMAP" id="MF_00652">
    <property type="entry name" value="UPF0246"/>
    <property type="match status" value="1"/>
</dbReference>
<dbReference type="InterPro" id="IPR005583">
    <property type="entry name" value="YaaA"/>
</dbReference>
<dbReference type="NCBIfam" id="NF002541">
    <property type="entry name" value="PRK02101.1-1"/>
    <property type="match status" value="1"/>
</dbReference>
<dbReference type="NCBIfam" id="NF002542">
    <property type="entry name" value="PRK02101.1-3"/>
    <property type="match status" value="1"/>
</dbReference>
<dbReference type="PANTHER" id="PTHR30283:SF4">
    <property type="entry name" value="PEROXIDE STRESS RESISTANCE PROTEIN YAAA"/>
    <property type="match status" value="1"/>
</dbReference>
<dbReference type="PANTHER" id="PTHR30283">
    <property type="entry name" value="PEROXIDE STRESS RESPONSE PROTEIN YAAA"/>
    <property type="match status" value="1"/>
</dbReference>
<dbReference type="Pfam" id="PF03883">
    <property type="entry name" value="H2O2_YaaD"/>
    <property type="match status" value="1"/>
</dbReference>
<keyword id="KW-1185">Reference proteome</keyword>
<organism>
    <name type="scientific">Escherichia coli O139:H28 (strain E24377A / ETEC)</name>
    <dbReference type="NCBI Taxonomy" id="331111"/>
    <lineage>
        <taxon>Bacteria</taxon>
        <taxon>Pseudomonadati</taxon>
        <taxon>Pseudomonadota</taxon>
        <taxon>Gammaproteobacteria</taxon>
        <taxon>Enterobacterales</taxon>
        <taxon>Enterobacteriaceae</taxon>
        <taxon>Escherichia</taxon>
    </lineage>
</organism>
<proteinExistence type="inferred from homology"/>
<evidence type="ECO:0000255" key="1">
    <source>
        <dbReference type="HAMAP-Rule" id="MF_00652"/>
    </source>
</evidence>
<reference key="1">
    <citation type="journal article" date="2008" name="J. Bacteriol.">
        <title>The pangenome structure of Escherichia coli: comparative genomic analysis of E. coli commensal and pathogenic isolates.</title>
        <authorList>
            <person name="Rasko D.A."/>
            <person name="Rosovitz M.J."/>
            <person name="Myers G.S.A."/>
            <person name="Mongodin E.F."/>
            <person name="Fricke W.F."/>
            <person name="Gajer P."/>
            <person name="Crabtree J."/>
            <person name="Sebaihia M."/>
            <person name="Thomson N.R."/>
            <person name="Chaudhuri R."/>
            <person name="Henderson I.R."/>
            <person name="Sperandio V."/>
            <person name="Ravel J."/>
        </authorList>
    </citation>
    <scope>NUCLEOTIDE SEQUENCE [LARGE SCALE GENOMIC DNA]</scope>
    <source>
        <strain>E24377A / ETEC</strain>
    </source>
</reference>
<gene>
    <name evidence="1" type="primary">yaaA</name>
    <name type="ordered locus">EcE24377A_0006</name>
</gene>
<sequence length="258" mass="29644">MLILISPAKTLDYQSPLTTTRYTLPELLDNSQQLIHEARKLTPPQISTLMRISDKLAGINAARFHDWQPDFTPENARQAILAFKGDVYTGLQAETFSEDDFDFAQQHLRMLSGLYGVLRPLDLMQPYRLEMGIRLENARGKDLYQFWGDIITNKLNEALAAQGDNVVINLASDEYFKSVKPKKLNAEIIKPVFLDEKNGKFKIISFYAKKARGLMSRFIIENRLTKPEQLTGFNSEGYFFDEDSSSNGELVFKRYEQR</sequence>
<feature type="chain" id="PRO_1000061597" description="UPF0246 protein YaaA">
    <location>
        <begin position="1"/>
        <end position="258"/>
    </location>
</feature>
<name>YAAA_ECO24</name>
<accession>A7ZH96</accession>